<name>SLD5_CANGA</name>
<dbReference type="EMBL" id="CR380953">
    <property type="protein sequence ID" value="CAG59486.1"/>
    <property type="molecule type" value="Genomic_DNA"/>
</dbReference>
<dbReference type="RefSeq" id="XP_446559.1">
    <property type="nucleotide sequence ID" value="XM_446559.1"/>
</dbReference>
<dbReference type="SMR" id="Q6FT85"/>
<dbReference type="FunCoup" id="Q6FT85">
    <property type="interactions" value="681"/>
</dbReference>
<dbReference type="STRING" id="284593.Q6FT85"/>
<dbReference type="EnsemblFungi" id="CAGL0G04587g-T">
    <property type="protein sequence ID" value="CAGL0G04587g-T-p1"/>
    <property type="gene ID" value="CAGL0G04587g"/>
</dbReference>
<dbReference type="KEGG" id="cgr:2888425"/>
<dbReference type="CGD" id="CAL0137781">
    <property type="gene designation" value="CAGL0G04587g"/>
</dbReference>
<dbReference type="VEuPathDB" id="FungiDB:B1J91_G04587g"/>
<dbReference type="VEuPathDB" id="FungiDB:CAGL0G04587g"/>
<dbReference type="eggNOG" id="KOG3176">
    <property type="taxonomic scope" value="Eukaryota"/>
</dbReference>
<dbReference type="HOGENOM" id="CLU_071893_2_0_1"/>
<dbReference type="InParanoid" id="Q6FT85"/>
<dbReference type="Proteomes" id="UP000002428">
    <property type="component" value="Chromosome G"/>
</dbReference>
<dbReference type="GO" id="GO:0071162">
    <property type="term" value="C:CMG complex"/>
    <property type="evidence" value="ECO:0007669"/>
    <property type="project" value="EnsemblFungi"/>
</dbReference>
<dbReference type="GO" id="GO:0000811">
    <property type="term" value="C:GINS complex"/>
    <property type="evidence" value="ECO:0007669"/>
    <property type="project" value="EnsemblFungi"/>
</dbReference>
<dbReference type="GO" id="GO:0043596">
    <property type="term" value="C:nuclear replication fork"/>
    <property type="evidence" value="ECO:0007669"/>
    <property type="project" value="EnsemblFungi"/>
</dbReference>
<dbReference type="GO" id="GO:0007059">
    <property type="term" value="P:chromosome segregation"/>
    <property type="evidence" value="ECO:0007669"/>
    <property type="project" value="UniProtKB-KW"/>
</dbReference>
<dbReference type="GO" id="GO:0006261">
    <property type="term" value="P:DNA-templated DNA replication"/>
    <property type="evidence" value="ECO:0007669"/>
    <property type="project" value="EnsemblFungi"/>
</dbReference>
<dbReference type="GO" id="GO:0000727">
    <property type="term" value="P:double-strand break repair via break-induced replication"/>
    <property type="evidence" value="ECO:0007669"/>
    <property type="project" value="EnsemblFungi"/>
</dbReference>
<dbReference type="CDD" id="cd11711">
    <property type="entry name" value="GINS_A_Sld5"/>
    <property type="match status" value="1"/>
</dbReference>
<dbReference type="CDD" id="cd21692">
    <property type="entry name" value="GINS_B_Sld5"/>
    <property type="match status" value="1"/>
</dbReference>
<dbReference type="FunFam" id="1.20.58.1030:FF:000009">
    <property type="entry name" value="DNA replication complex GINS protein SLD5"/>
    <property type="match status" value="1"/>
</dbReference>
<dbReference type="Gene3D" id="1.20.58.1030">
    <property type="match status" value="1"/>
</dbReference>
<dbReference type="Gene3D" id="3.40.5.60">
    <property type="match status" value="1"/>
</dbReference>
<dbReference type="InterPro" id="IPR021151">
    <property type="entry name" value="GINS_A"/>
</dbReference>
<dbReference type="InterPro" id="IPR036224">
    <property type="entry name" value="GINS_bundle-like_dom_sf"/>
</dbReference>
<dbReference type="InterPro" id="IPR008591">
    <property type="entry name" value="GINS_Sld5"/>
</dbReference>
<dbReference type="InterPro" id="IPR031633">
    <property type="entry name" value="SLD5_C"/>
</dbReference>
<dbReference type="InterPro" id="IPR038749">
    <property type="entry name" value="Sld5_GINS_A"/>
</dbReference>
<dbReference type="PANTHER" id="PTHR21206:SF0">
    <property type="entry name" value="DNA REPLICATION COMPLEX GINS PROTEIN SLD5"/>
    <property type="match status" value="1"/>
</dbReference>
<dbReference type="PANTHER" id="PTHR21206">
    <property type="entry name" value="SLD5 PROTEIN"/>
    <property type="match status" value="1"/>
</dbReference>
<dbReference type="Pfam" id="PF05916">
    <property type="entry name" value="Sld5"/>
    <property type="match status" value="1"/>
</dbReference>
<dbReference type="Pfam" id="PF16922">
    <property type="entry name" value="SLD5_C"/>
    <property type="match status" value="1"/>
</dbReference>
<dbReference type="PIRSF" id="PIRSF007764">
    <property type="entry name" value="Sld5"/>
    <property type="match status" value="1"/>
</dbReference>
<dbReference type="SUPFAM" id="SSF158573">
    <property type="entry name" value="GINS helical bundle-like"/>
    <property type="match status" value="1"/>
</dbReference>
<dbReference type="SUPFAM" id="SSF160059">
    <property type="entry name" value="PriA/YqbF domain"/>
    <property type="match status" value="1"/>
</dbReference>
<protein>
    <recommendedName>
        <fullName>DNA replication complex GINS protein SLD5</fullName>
    </recommendedName>
</protein>
<feature type="chain" id="PRO_0000255429" description="DNA replication complex GINS protein SLD5">
    <location>
        <begin position="1"/>
        <end position="309"/>
    </location>
</feature>
<organism>
    <name type="scientific">Candida glabrata (strain ATCC 2001 / BCRC 20586 / JCM 3761 / NBRC 0622 / NRRL Y-65 / CBS 138)</name>
    <name type="common">Yeast</name>
    <name type="synonym">Nakaseomyces glabratus</name>
    <dbReference type="NCBI Taxonomy" id="284593"/>
    <lineage>
        <taxon>Eukaryota</taxon>
        <taxon>Fungi</taxon>
        <taxon>Dikarya</taxon>
        <taxon>Ascomycota</taxon>
        <taxon>Saccharomycotina</taxon>
        <taxon>Saccharomycetes</taxon>
        <taxon>Saccharomycetales</taxon>
        <taxon>Saccharomycetaceae</taxon>
        <taxon>Nakaseomyces</taxon>
    </lineage>
</organism>
<accession>Q6FT85</accession>
<keyword id="KW-0159">Chromosome partition</keyword>
<keyword id="KW-0235">DNA replication</keyword>
<keyword id="KW-0539">Nucleus</keyword>
<keyword id="KW-1185">Reference proteome</keyword>
<proteinExistence type="inferred from homology"/>
<reference key="1">
    <citation type="journal article" date="2004" name="Nature">
        <title>Genome evolution in yeasts.</title>
        <authorList>
            <person name="Dujon B."/>
            <person name="Sherman D."/>
            <person name="Fischer G."/>
            <person name="Durrens P."/>
            <person name="Casaregola S."/>
            <person name="Lafontaine I."/>
            <person name="de Montigny J."/>
            <person name="Marck C."/>
            <person name="Neuveglise C."/>
            <person name="Talla E."/>
            <person name="Goffard N."/>
            <person name="Frangeul L."/>
            <person name="Aigle M."/>
            <person name="Anthouard V."/>
            <person name="Babour A."/>
            <person name="Barbe V."/>
            <person name="Barnay S."/>
            <person name="Blanchin S."/>
            <person name="Beckerich J.-M."/>
            <person name="Beyne E."/>
            <person name="Bleykasten C."/>
            <person name="Boisrame A."/>
            <person name="Boyer J."/>
            <person name="Cattolico L."/>
            <person name="Confanioleri F."/>
            <person name="de Daruvar A."/>
            <person name="Despons L."/>
            <person name="Fabre E."/>
            <person name="Fairhead C."/>
            <person name="Ferry-Dumazet H."/>
            <person name="Groppi A."/>
            <person name="Hantraye F."/>
            <person name="Hennequin C."/>
            <person name="Jauniaux N."/>
            <person name="Joyet P."/>
            <person name="Kachouri R."/>
            <person name="Kerrest A."/>
            <person name="Koszul R."/>
            <person name="Lemaire M."/>
            <person name="Lesur I."/>
            <person name="Ma L."/>
            <person name="Muller H."/>
            <person name="Nicaud J.-M."/>
            <person name="Nikolski M."/>
            <person name="Oztas S."/>
            <person name="Ozier-Kalogeropoulos O."/>
            <person name="Pellenz S."/>
            <person name="Potier S."/>
            <person name="Richard G.-F."/>
            <person name="Straub M.-L."/>
            <person name="Suleau A."/>
            <person name="Swennen D."/>
            <person name="Tekaia F."/>
            <person name="Wesolowski-Louvel M."/>
            <person name="Westhof E."/>
            <person name="Wirth B."/>
            <person name="Zeniou-Meyer M."/>
            <person name="Zivanovic Y."/>
            <person name="Bolotin-Fukuhara M."/>
            <person name="Thierry A."/>
            <person name="Bouchier C."/>
            <person name="Caudron B."/>
            <person name="Scarpelli C."/>
            <person name="Gaillardin C."/>
            <person name="Weissenbach J."/>
            <person name="Wincker P."/>
            <person name="Souciet J.-L."/>
        </authorList>
    </citation>
    <scope>NUCLEOTIDE SEQUENCE [LARGE SCALE GENOMIC DNA]</scope>
    <source>
        <strain>ATCC 2001 / BCRC 20586 / JCM 3761 / NBRC 0622 / NRRL Y-65 / CBS 138</strain>
    </source>
</reference>
<gene>
    <name type="primary">SLD5</name>
    <name type="ordered locus">CAGL0G04587g</name>
</gene>
<evidence type="ECO:0000250" key="1"/>
<evidence type="ECO:0000305" key="2"/>
<sequence>MDIDIDDILAELDRDTTAVASSSGQHGFLDANSSMQHVTQTTAFDSSLPHANNLQKDYSPVTPEQDYLQLLKHWRNERCAPELLPLPKLLVSRMLKRIQDQMEHIENISMGFLEHEILEKDGEEAIGQNEYQNNALNNGKLPLLCMEAELERVKFVMRSYLRCRLNKIDKYSLYLRQLGDQGINLISLDELMSEQELKYHAKHSVILLKLLNNSILRHMPPELQAINDTEGSVSMIEEPNWKKFVFIYVNGPANVADDPQLQQSEDGKYYYNITIPEFDEIVELTTGSIYVMRYDIVKDLLRDGKVELI</sequence>
<comment type="function">
    <text evidence="1">The GINS complex plays an essential role in the initiation of DNA replication. Has a role in chromosome segregation (By similarity).</text>
</comment>
<comment type="subunit">
    <text evidence="1">Component of the GINS complex which is a heterotetramer of SLD5, PSF1, PSF2 and PSF3.</text>
</comment>
<comment type="subcellular location">
    <subcellularLocation>
        <location evidence="1">Nucleus</location>
    </subcellularLocation>
</comment>
<comment type="similarity">
    <text evidence="2">Belongs to the GINS4/SLD5 family.</text>
</comment>